<gene>
    <name type="ordered locus">AF_1571</name>
</gene>
<reference key="1">
    <citation type="journal article" date="1997" name="Nature">
        <title>The complete genome sequence of the hyperthermophilic, sulphate-reducing archaeon Archaeoglobus fulgidus.</title>
        <authorList>
            <person name="Klenk H.-P."/>
            <person name="Clayton R.A."/>
            <person name="Tomb J.-F."/>
            <person name="White O."/>
            <person name="Nelson K.E."/>
            <person name="Ketchum K.A."/>
            <person name="Dodson R.J."/>
            <person name="Gwinn M.L."/>
            <person name="Hickey E.K."/>
            <person name="Peterson J.D."/>
            <person name="Richardson D.L."/>
            <person name="Kerlavage A.R."/>
            <person name="Graham D.E."/>
            <person name="Kyrpides N.C."/>
            <person name="Fleischmann R.D."/>
            <person name="Quackenbush J."/>
            <person name="Lee N.H."/>
            <person name="Sutton G.G."/>
            <person name="Gill S.R."/>
            <person name="Kirkness E.F."/>
            <person name="Dougherty B.A."/>
            <person name="McKenney K."/>
            <person name="Adams M.D."/>
            <person name="Loftus B.J."/>
            <person name="Peterson S.N."/>
            <person name="Reich C.I."/>
            <person name="McNeil L.K."/>
            <person name="Badger J.H."/>
            <person name="Glodek A."/>
            <person name="Zhou L."/>
            <person name="Overbeek R."/>
            <person name="Gocayne J.D."/>
            <person name="Weidman J.F."/>
            <person name="McDonald L.A."/>
            <person name="Utterback T.R."/>
            <person name="Cotton M.D."/>
            <person name="Spriggs T."/>
            <person name="Artiach P."/>
            <person name="Kaine B.P."/>
            <person name="Sykes S.M."/>
            <person name="Sadow P.W."/>
            <person name="D'Andrea K.P."/>
            <person name="Bowman C."/>
            <person name="Fujii C."/>
            <person name="Garland S.A."/>
            <person name="Mason T.M."/>
            <person name="Olsen G.J."/>
            <person name="Fraser C.M."/>
            <person name="Smith H.O."/>
            <person name="Woese C.R."/>
            <person name="Venter J.C."/>
        </authorList>
    </citation>
    <scope>NUCLEOTIDE SEQUENCE [LARGE SCALE GENOMIC DNA]</scope>
    <source>
        <strain>ATCC 49558 / DSM 4304 / JCM 9628 / NBRC 100126 / VC-16</strain>
    </source>
</reference>
<name>Y1571_ARCFU</name>
<accession>O28701</accession>
<evidence type="ECO:0000255" key="1"/>
<keyword id="KW-1185">Reference proteome</keyword>
<keyword id="KW-0732">Signal</keyword>
<sequence>MQKKVLSLVLVLAVLESIVPVSAWGTITHVRMSSEAGNPYTGFKMEYLSGSIAPDAGYIISTEWGTKFHGYYVNDALNIANKMLSLAEGTDEKAFAKGWLAHLMQDRVAHGNGDGLPKDQAYGEGYSNYAAKKYGLTHIEAEFFVNGRVIHEKGWDWDFVRFAVPTELIVKTMRSLYGSAPNENDLNNAYNTFAMEYYGELAFWNSPSGNTAYLTLLLFGTVSDYDDYVSDVHCNPYEESIYLTNHPNARSTYAAGTYIMGVKKVKSSDGQIKKWMKEYAERLEKAGAIKVNRKFEDGWLVIEFRMVDKYKADRIAKEVLQDMARSEEIFQFINLKGDEK</sequence>
<protein>
    <recommendedName>
        <fullName>Uncharacterized protein AF_1571</fullName>
    </recommendedName>
</protein>
<organism>
    <name type="scientific">Archaeoglobus fulgidus (strain ATCC 49558 / DSM 4304 / JCM 9628 / NBRC 100126 / VC-16)</name>
    <dbReference type="NCBI Taxonomy" id="224325"/>
    <lineage>
        <taxon>Archaea</taxon>
        <taxon>Methanobacteriati</taxon>
        <taxon>Methanobacteriota</taxon>
        <taxon>Archaeoglobi</taxon>
        <taxon>Archaeoglobales</taxon>
        <taxon>Archaeoglobaceae</taxon>
        <taxon>Archaeoglobus</taxon>
    </lineage>
</organism>
<dbReference type="EMBL" id="AE000782">
    <property type="protein sequence ID" value="AAB89684.1"/>
    <property type="molecule type" value="Genomic_DNA"/>
</dbReference>
<dbReference type="PIR" id="B69446">
    <property type="entry name" value="B69446"/>
</dbReference>
<dbReference type="RefSeq" id="WP_010879068.1">
    <property type="nucleotide sequence ID" value="NC_000917.1"/>
</dbReference>
<dbReference type="STRING" id="224325.AF_1571"/>
<dbReference type="PaxDb" id="224325-AF_1571"/>
<dbReference type="EnsemblBacteria" id="AAB89684">
    <property type="protein sequence ID" value="AAB89684"/>
    <property type="gene ID" value="AF_1571"/>
</dbReference>
<dbReference type="GeneID" id="1484799"/>
<dbReference type="KEGG" id="afu:AF_1571"/>
<dbReference type="HOGENOM" id="CLU_904897_0_0_2"/>
<dbReference type="Proteomes" id="UP000002199">
    <property type="component" value="Chromosome"/>
</dbReference>
<dbReference type="InterPro" id="IPR029002">
    <property type="entry name" value="PLPC/GPLD1"/>
</dbReference>
<dbReference type="Pfam" id="PF00882">
    <property type="entry name" value="Zn_dep_PLPC"/>
    <property type="match status" value="1"/>
</dbReference>
<feature type="signal peptide" evidence="1">
    <location>
        <begin position="1"/>
        <end position="23"/>
    </location>
</feature>
<feature type="chain" id="PRO_0000013663" description="Uncharacterized protein AF_1571">
    <location>
        <begin position="24"/>
        <end position="340"/>
    </location>
</feature>
<proteinExistence type="inferred from homology"/>